<evidence type="ECO:0000255" key="1">
    <source>
        <dbReference type="HAMAP-Rule" id="MF_01201"/>
    </source>
</evidence>
<gene>
    <name type="primary">alr</name>
    <name type="ordered locus">Ajs_0176</name>
</gene>
<organism>
    <name type="scientific">Acidovorax sp. (strain JS42)</name>
    <dbReference type="NCBI Taxonomy" id="232721"/>
    <lineage>
        <taxon>Bacteria</taxon>
        <taxon>Pseudomonadati</taxon>
        <taxon>Pseudomonadota</taxon>
        <taxon>Betaproteobacteria</taxon>
        <taxon>Burkholderiales</taxon>
        <taxon>Comamonadaceae</taxon>
        <taxon>Acidovorax</taxon>
    </lineage>
</organism>
<sequence length="365" mass="39386">MPRPILATIHPAAVHHNLERARRAAPDARVWAVVKANAYGHGIERVFEGLRAADGFALLDLAEAERVRALGWRGPILLLEGVFEPRDLELCSRLGLWHAVHCDAQIDWLAAHKTQVPHRVFLKMNSGMNRLGFTPERYRSAWARLNALPQVDEISCMTHFSDADGPRGIAHQVQAFQAATQDLPGERCIANSAALLRHGGDAQVRLDWVRAGIVLYGSAPDHPERRAADWDLQPTMTLASRIIGVQQLQAGDTVGYGSRFTAQGPLGIGIVACGYADGYPRHCDTGTPVLVNGVRTRTIGRVSMDMLAVDLTPVPGAGLGAEVTLWGRAANGAVLPIDEVAQAGGTIGYELMCALAPRVPVVVQD</sequence>
<dbReference type="EC" id="5.1.1.1" evidence="1"/>
<dbReference type="EMBL" id="CP000539">
    <property type="protein sequence ID" value="ABM40431.1"/>
    <property type="molecule type" value="Genomic_DNA"/>
</dbReference>
<dbReference type="SMR" id="A1W2F6"/>
<dbReference type="STRING" id="232721.Ajs_0176"/>
<dbReference type="KEGG" id="ajs:Ajs_0176"/>
<dbReference type="eggNOG" id="COG0787">
    <property type="taxonomic scope" value="Bacteria"/>
</dbReference>
<dbReference type="HOGENOM" id="CLU_028393_1_0_4"/>
<dbReference type="UniPathway" id="UPA00042">
    <property type="reaction ID" value="UER00497"/>
</dbReference>
<dbReference type="Proteomes" id="UP000000645">
    <property type="component" value="Chromosome"/>
</dbReference>
<dbReference type="GO" id="GO:0005829">
    <property type="term" value="C:cytosol"/>
    <property type="evidence" value="ECO:0007669"/>
    <property type="project" value="TreeGrafter"/>
</dbReference>
<dbReference type="GO" id="GO:0008784">
    <property type="term" value="F:alanine racemase activity"/>
    <property type="evidence" value="ECO:0007669"/>
    <property type="project" value="UniProtKB-UniRule"/>
</dbReference>
<dbReference type="GO" id="GO:0030170">
    <property type="term" value="F:pyridoxal phosphate binding"/>
    <property type="evidence" value="ECO:0007669"/>
    <property type="project" value="UniProtKB-UniRule"/>
</dbReference>
<dbReference type="GO" id="GO:0030632">
    <property type="term" value="P:D-alanine biosynthetic process"/>
    <property type="evidence" value="ECO:0007669"/>
    <property type="project" value="UniProtKB-UniRule"/>
</dbReference>
<dbReference type="CDD" id="cd06827">
    <property type="entry name" value="PLPDE_III_AR_proteobact"/>
    <property type="match status" value="1"/>
</dbReference>
<dbReference type="FunFam" id="3.20.20.10:FF:000002">
    <property type="entry name" value="Alanine racemase"/>
    <property type="match status" value="1"/>
</dbReference>
<dbReference type="Gene3D" id="3.20.20.10">
    <property type="entry name" value="Alanine racemase"/>
    <property type="match status" value="1"/>
</dbReference>
<dbReference type="Gene3D" id="2.40.37.10">
    <property type="entry name" value="Lyase, Ornithine Decarboxylase, Chain A, domain 1"/>
    <property type="match status" value="1"/>
</dbReference>
<dbReference type="HAMAP" id="MF_01201">
    <property type="entry name" value="Ala_racemase"/>
    <property type="match status" value="1"/>
</dbReference>
<dbReference type="InterPro" id="IPR000821">
    <property type="entry name" value="Ala_racemase"/>
</dbReference>
<dbReference type="InterPro" id="IPR009006">
    <property type="entry name" value="Ala_racemase/Decarboxylase_C"/>
</dbReference>
<dbReference type="InterPro" id="IPR011079">
    <property type="entry name" value="Ala_racemase_C"/>
</dbReference>
<dbReference type="InterPro" id="IPR001608">
    <property type="entry name" value="Ala_racemase_N"/>
</dbReference>
<dbReference type="InterPro" id="IPR020622">
    <property type="entry name" value="Ala_racemase_pyridoxalP-BS"/>
</dbReference>
<dbReference type="InterPro" id="IPR029066">
    <property type="entry name" value="PLP-binding_barrel"/>
</dbReference>
<dbReference type="NCBIfam" id="TIGR00492">
    <property type="entry name" value="alr"/>
    <property type="match status" value="1"/>
</dbReference>
<dbReference type="PANTHER" id="PTHR30511">
    <property type="entry name" value="ALANINE RACEMASE"/>
    <property type="match status" value="1"/>
</dbReference>
<dbReference type="PANTHER" id="PTHR30511:SF0">
    <property type="entry name" value="ALANINE RACEMASE, CATABOLIC-RELATED"/>
    <property type="match status" value="1"/>
</dbReference>
<dbReference type="Pfam" id="PF00842">
    <property type="entry name" value="Ala_racemase_C"/>
    <property type="match status" value="1"/>
</dbReference>
<dbReference type="Pfam" id="PF01168">
    <property type="entry name" value="Ala_racemase_N"/>
    <property type="match status" value="1"/>
</dbReference>
<dbReference type="PRINTS" id="PR00992">
    <property type="entry name" value="ALARACEMASE"/>
</dbReference>
<dbReference type="SMART" id="SM01005">
    <property type="entry name" value="Ala_racemase_C"/>
    <property type="match status" value="1"/>
</dbReference>
<dbReference type="SUPFAM" id="SSF50621">
    <property type="entry name" value="Alanine racemase C-terminal domain-like"/>
    <property type="match status" value="1"/>
</dbReference>
<dbReference type="SUPFAM" id="SSF51419">
    <property type="entry name" value="PLP-binding barrel"/>
    <property type="match status" value="1"/>
</dbReference>
<dbReference type="PROSITE" id="PS00395">
    <property type="entry name" value="ALANINE_RACEMASE"/>
    <property type="match status" value="1"/>
</dbReference>
<reference key="1">
    <citation type="submission" date="2006-12" db="EMBL/GenBank/DDBJ databases">
        <title>Complete sequence of chromosome 1 of Acidovorax sp. JS42.</title>
        <authorList>
            <person name="Copeland A."/>
            <person name="Lucas S."/>
            <person name="Lapidus A."/>
            <person name="Barry K."/>
            <person name="Detter J.C."/>
            <person name="Glavina del Rio T."/>
            <person name="Dalin E."/>
            <person name="Tice H."/>
            <person name="Pitluck S."/>
            <person name="Chertkov O."/>
            <person name="Brettin T."/>
            <person name="Bruce D."/>
            <person name="Han C."/>
            <person name="Tapia R."/>
            <person name="Gilna P."/>
            <person name="Schmutz J."/>
            <person name="Larimer F."/>
            <person name="Land M."/>
            <person name="Hauser L."/>
            <person name="Kyrpides N."/>
            <person name="Kim E."/>
            <person name="Stahl D."/>
            <person name="Richardson P."/>
        </authorList>
    </citation>
    <scope>NUCLEOTIDE SEQUENCE [LARGE SCALE GENOMIC DNA]</scope>
    <source>
        <strain>JS42</strain>
    </source>
</reference>
<protein>
    <recommendedName>
        <fullName evidence="1">Alanine racemase</fullName>
        <ecNumber evidence="1">5.1.1.1</ecNumber>
    </recommendedName>
</protein>
<name>ALR_ACISJ</name>
<proteinExistence type="inferred from homology"/>
<keyword id="KW-0413">Isomerase</keyword>
<keyword id="KW-0663">Pyridoxal phosphate</keyword>
<feature type="chain" id="PRO_1000065966" description="Alanine racemase">
    <location>
        <begin position="1"/>
        <end position="365"/>
    </location>
</feature>
<feature type="active site" description="Proton acceptor; specific for D-alanine" evidence="1">
    <location>
        <position position="35"/>
    </location>
</feature>
<feature type="active site" description="Proton acceptor; specific for L-alanine" evidence="1">
    <location>
        <position position="256"/>
    </location>
</feature>
<feature type="binding site" evidence="1">
    <location>
        <position position="130"/>
    </location>
    <ligand>
        <name>substrate</name>
    </ligand>
</feature>
<feature type="binding site" evidence="1">
    <location>
        <position position="304"/>
    </location>
    <ligand>
        <name>substrate</name>
    </ligand>
</feature>
<feature type="modified residue" description="N6-(pyridoxal phosphate)lysine" evidence="1">
    <location>
        <position position="35"/>
    </location>
</feature>
<comment type="function">
    <text evidence="1">Catalyzes the interconversion of L-alanine and D-alanine. May also act on other amino acids.</text>
</comment>
<comment type="catalytic activity">
    <reaction evidence="1">
        <text>L-alanine = D-alanine</text>
        <dbReference type="Rhea" id="RHEA:20249"/>
        <dbReference type="ChEBI" id="CHEBI:57416"/>
        <dbReference type="ChEBI" id="CHEBI:57972"/>
        <dbReference type="EC" id="5.1.1.1"/>
    </reaction>
</comment>
<comment type="cofactor">
    <cofactor evidence="1">
        <name>pyridoxal 5'-phosphate</name>
        <dbReference type="ChEBI" id="CHEBI:597326"/>
    </cofactor>
</comment>
<comment type="pathway">
    <text evidence="1">Amino-acid biosynthesis; D-alanine biosynthesis; D-alanine from L-alanine: step 1/1.</text>
</comment>
<comment type="similarity">
    <text evidence="1">Belongs to the alanine racemase family.</text>
</comment>
<accession>A1W2F6</accession>